<reference key="1">
    <citation type="journal article" date="2012" name="Stand. Genomic Sci.">
        <title>Complete genome sequence of Polynucleobacter necessarius subsp. asymbioticus type strain (QLW-P1DMWA-1(T)).</title>
        <authorList>
            <person name="Meincke L."/>
            <person name="Copeland A."/>
            <person name="Lapidus A."/>
            <person name="Lucas S."/>
            <person name="Berry K.W."/>
            <person name="Del Rio T.G."/>
            <person name="Hammon N."/>
            <person name="Dalin E."/>
            <person name="Tice H."/>
            <person name="Pitluck S."/>
            <person name="Richardson P."/>
            <person name="Bruce D."/>
            <person name="Goodwin L."/>
            <person name="Han C."/>
            <person name="Tapia R."/>
            <person name="Detter J.C."/>
            <person name="Schmutz J."/>
            <person name="Brettin T."/>
            <person name="Larimer F."/>
            <person name="Land M."/>
            <person name="Hauser L."/>
            <person name="Kyrpides N.C."/>
            <person name="Ivanova N."/>
            <person name="Goker M."/>
            <person name="Woyke T."/>
            <person name="Wu Q.L."/>
            <person name="Pockl M."/>
            <person name="Hahn M.W."/>
            <person name="Klenk H.P."/>
        </authorList>
    </citation>
    <scope>NUCLEOTIDE SEQUENCE [LARGE SCALE GENOMIC DNA]</scope>
    <source>
        <strain>DSM 18221 / CIP 109841 / QLW-P1DMWA-1</strain>
    </source>
</reference>
<name>GRPE_POLAQ</name>
<comment type="function">
    <text evidence="1">Participates actively in the response to hyperosmotic and heat shock by preventing the aggregation of stress-denatured proteins, in association with DnaK and GrpE. It is the nucleotide exchange factor for DnaK and may function as a thermosensor. Unfolded proteins bind initially to DnaJ; upon interaction with the DnaJ-bound protein, DnaK hydrolyzes its bound ATP, resulting in the formation of a stable complex. GrpE releases ADP from DnaK; ATP binding to DnaK triggers the release of the substrate protein, thus completing the reaction cycle. Several rounds of ATP-dependent interactions between DnaJ, DnaK and GrpE are required for fully efficient folding.</text>
</comment>
<comment type="subunit">
    <text evidence="1">Homodimer.</text>
</comment>
<comment type="subcellular location">
    <subcellularLocation>
        <location evidence="1">Cytoplasm</location>
    </subcellularLocation>
</comment>
<comment type="similarity">
    <text evidence="1">Belongs to the GrpE family.</text>
</comment>
<accession>A4SZR9</accession>
<sequence length="184" mass="20000">MTQENQNPPPEQEDVAADPQVNEAAASEPAAVKTPEQEIADLNQQIGELQDNFLRAKAEGENIRRRAVEDIAKAHKFAIESFAEHLVPVTDSLYAALSTDAGDAKAFKEGLEITLKQLLSAFEKGRMTEINPAVGDKFDPHHHQAIASVPSEQDPNTVVSVLQRGYTVADRVLRPALVTVSAPK</sequence>
<keyword id="KW-0143">Chaperone</keyword>
<keyword id="KW-0963">Cytoplasm</keyword>
<keyword id="KW-1185">Reference proteome</keyword>
<keyword id="KW-0346">Stress response</keyword>
<evidence type="ECO:0000255" key="1">
    <source>
        <dbReference type="HAMAP-Rule" id="MF_01151"/>
    </source>
</evidence>
<evidence type="ECO:0000256" key="2">
    <source>
        <dbReference type="SAM" id="MobiDB-lite"/>
    </source>
</evidence>
<protein>
    <recommendedName>
        <fullName evidence="1">Protein GrpE</fullName>
    </recommendedName>
    <alternativeName>
        <fullName evidence="1">HSP-70 cofactor</fullName>
    </alternativeName>
</protein>
<gene>
    <name evidence="1" type="primary">grpE</name>
    <name type="ordered locus">Pnuc_1770</name>
</gene>
<feature type="chain" id="PRO_1000085120" description="Protein GrpE">
    <location>
        <begin position="1"/>
        <end position="184"/>
    </location>
</feature>
<feature type="region of interest" description="Disordered" evidence="2">
    <location>
        <begin position="1"/>
        <end position="35"/>
    </location>
</feature>
<proteinExistence type="inferred from homology"/>
<organism>
    <name type="scientific">Polynucleobacter asymbioticus (strain DSM 18221 / CIP 109841 / QLW-P1DMWA-1)</name>
    <name type="common">Polynucleobacter necessarius subsp. asymbioticus</name>
    <dbReference type="NCBI Taxonomy" id="312153"/>
    <lineage>
        <taxon>Bacteria</taxon>
        <taxon>Pseudomonadati</taxon>
        <taxon>Pseudomonadota</taxon>
        <taxon>Betaproteobacteria</taxon>
        <taxon>Burkholderiales</taxon>
        <taxon>Burkholderiaceae</taxon>
        <taxon>Polynucleobacter</taxon>
    </lineage>
</organism>
<dbReference type="EMBL" id="CP000655">
    <property type="protein sequence ID" value="ABP34983.1"/>
    <property type="molecule type" value="Genomic_DNA"/>
</dbReference>
<dbReference type="RefSeq" id="WP_011903606.1">
    <property type="nucleotide sequence ID" value="NC_009379.1"/>
</dbReference>
<dbReference type="SMR" id="A4SZR9"/>
<dbReference type="GeneID" id="31482159"/>
<dbReference type="KEGG" id="pnu:Pnuc_1770"/>
<dbReference type="eggNOG" id="COG0576">
    <property type="taxonomic scope" value="Bacteria"/>
</dbReference>
<dbReference type="HOGENOM" id="CLU_057217_6_1_4"/>
<dbReference type="Proteomes" id="UP000000231">
    <property type="component" value="Chromosome"/>
</dbReference>
<dbReference type="GO" id="GO:0005829">
    <property type="term" value="C:cytosol"/>
    <property type="evidence" value="ECO:0007669"/>
    <property type="project" value="TreeGrafter"/>
</dbReference>
<dbReference type="GO" id="GO:0000774">
    <property type="term" value="F:adenyl-nucleotide exchange factor activity"/>
    <property type="evidence" value="ECO:0007669"/>
    <property type="project" value="InterPro"/>
</dbReference>
<dbReference type="GO" id="GO:0042803">
    <property type="term" value="F:protein homodimerization activity"/>
    <property type="evidence" value="ECO:0007669"/>
    <property type="project" value="InterPro"/>
</dbReference>
<dbReference type="GO" id="GO:0051087">
    <property type="term" value="F:protein-folding chaperone binding"/>
    <property type="evidence" value="ECO:0007669"/>
    <property type="project" value="InterPro"/>
</dbReference>
<dbReference type="GO" id="GO:0051082">
    <property type="term" value="F:unfolded protein binding"/>
    <property type="evidence" value="ECO:0007669"/>
    <property type="project" value="TreeGrafter"/>
</dbReference>
<dbReference type="GO" id="GO:0006457">
    <property type="term" value="P:protein folding"/>
    <property type="evidence" value="ECO:0007669"/>
    <property type="project" value="InterPro"/>
</dbReference>
<dbReference type="CDD" id="cd00446">
    <property type="entry name" value="GrpE"/>
    <property type="match status" value="1"/>
</dbReference>
<dbReference type="FunFam" id="2.30.22.10:FF:000001">
    <property type="entry name" value="Protein GrpE"/>
    <property type="match status" value="1"/>
</dbReference>
<dbReference type="Gene3D" id="3.90.20.20">
    <property type="match status" value="1"/>
</dbReference>
<dbReference type="Gene3D" id="2.30.22.10">
    <property type="entry name" value="Head domain of nucleotide exchange factor GrpE"/>
    <property type="match status" value="1"/>
</dbReference>
<dbReference type="HAMAP" id="MF_01151">
    <property type="entry name" value="GrpE"/>
    <property type="match status" value="1"/>
</dbReference>
<dbReference type="InterPro" id="IPR000740">
    <property type="entry name" value="GrpE"/>
</dbReference>
<dbReference type="InterPro" id="IPR013805">
    <property type="entry name" value="GrpE_coiled_coil"/>
</dbReference>
<dbReference type="InterPro" id="IPR009012">
    <property type="entry name" value="GrpE_head"/>
</dbReference>
<dbReference type="NCBIfam" id="NF010737">
    <property type="entry name" value="PRK14139.1"/>
    <property type="match status" value="1"/>
</dbReference>
<dbReference type="NCBIfam" id="NF010738">
    <property type="entry name" value="PRK14140.1"/>
    <property type="match status" value="1"/>
</dbReference>
<dbReference type="NCBIfam" id="NF010748">
    <property type="entry name" value="PRK14150.1"/>
    <property type="match status" value="1"/>
</dbReference>
<dbReference type="PANTHER" id="PTHR21237">
    <property type="entry name" value="GRPE PROTEIN"/>
    <property type="match status" value="1"/>
</dbReference>
<dbReference type="PANTHER" id="PTHR21237:SF23">
    <property type="entry name" value="GRPE PROTEIN HOMOLOG, MITOCHONDRIAL"/>
    <property type="match status" value="1"/>
</dbReference>
<dbReference type="Pfam" id="PF01025">
    <property type="entry name" value="GrpE"/>
    <property type="match status" value="1"/>
</dbReference>
<dbReference type="PRINTS" id="PR00773">
    <property type="entry name" value="GRPEPROTEIN"/>
</dbReference>
<dbReference type="SUPFAM" id="SSF58014">
    <property type="entry name" value="Coiled-coil domain of nucleotide exchange factor GrpE"/>
    <property type="match status" value="1"/>
</dbReference>
<dbReference type="SUPFAM" id="SSF51064">
    <property type="entry name" value="Head domain of nucleotide exchange factor GrpE"/>
    <property type="match status" value="1"/>
</dbReference>
<dbReference type="PROSITE" id="PS01071">
    <property type="entry name" value="GRPE"/>
    <property type="match status" value="1"/>
</dbReference>